<comment type="function">
    <text evidence="1">Catalyzes the reversible transfer of the terminal phosphate group between ATP and AMP. Plays an important role in cellular energy homeostasis and in adenine nucleotide metabolism.</text>
</comment>
<comment type="catalytic activity">
    <reaction evidence="1">
        <text>AMP + ATP = 2 ADP</text>
        <dbReference type="Rhea" id="RHEA:12973"/>
        <dbReference type="ChEBI" id="CHEBI:30616"/>
        <dbReference type="ChEBI" id="CHEBI:456215"/>
        <dbReference type="ChEBI" id="CHEBI:456216"/>
        <dbReference type="EC" id="2.7.4.3"/>
    </reaction>
</comment>
<comment type="pathway">
    <text evidence="1">Purine metabolism; AMP biosynthesis via salvage pathway; AMP from ADP: step 1/1.</text>
</comment>
<comment type="subunit">
    <text evidence="1">Monomer.</text>
</comment>
<comment type="subcellular location">
    <subcellularLocation>
        <location evidence="1">Cytoplasm</location>
    </subcellularLocation>
</comment>
<comment type="domain">
    <text evidence="1">Consists of three domains, a large central CORE domain and two small peripheral domains, NMPbind and LID, which undergo movements during catalysis. The LID domain closes over the site of phosphoryl transfer upon ATP binding. Assembling and dissambling the active center during each catalytic cycle provides an effective means to prevent ATP hydrolysis. Some bacteria have evolved a zinc-coordinating structure that stabilizes the LID domain.</text>
</comment>
<comment type="similarity">
    <text evidence="1">Belongs to the adenylate kinase family.</text>
</comment>
<reference key="1">
    <citation type="journal article" date="2001" name="Nucleic Acids Res.">
        <title>The complete genome sequence of the murine respiratory pathogen Mycoplasma pulmonis.</title>
        <authorList>
            <person name="Chambaud I."/>
            <person name="Heilig R."/>
            <person name="Ferris S."/>
            <person name="Barbe V."/>
            <person name="Samson D."/>
            <person name="Galisson F."/>
            <person name="Moszer I."/>
            <person name="Dybvig K."/>
            <person name="Wroblewski H."/>
            <person name="Viari A."/>
            <person name="Rocha E.P.C."/>
            <person name="Blanchard A."/>
        </authorList>
    </citation>
    <scope>NUCLEOTIDE SEQUENCE [LARGE SCALE GENOMIC DNA]</scope>
    <source>
        <strain>UAB CTIP</strain>
    </source>
</reference>
<keyword id="KW-0067">ATP-binding</keyword>
<keyword id="KW-0963">Cytoplasm</keyword>
<keyword id="KW-0418">Kinase</keyword>
<keyword id="KW-0479">Metal-binding</keyword>
<keyword id="KW-0545">Nucleotide biosynthesis</keyword>
<keyword id="KW-0547">Nucleotide-binding</keyword>
<keyword id="KW-1185">Reference proteome</keyword>
<keyword id="KW-0808">Transferase</keyword>
<keyword id="KW-0862">Zinc</keyword>
<evidence type="ECO:0000255" key="1">
    <source>
        <dbReference type="HAMAP-Rule" id="MF_00235"/>
    </source>
</evidence>
<dbReference type="EC" id="2.7.4.3" evidence="1"/>
<dbReference type="EMBL" id="AL445565">
    <property type="protein sequence ID" value="CAC13740.1"/>
    <property type="molecule type" value="Genomic_DNA"/>
</dbReference>
<dbReference type="PIR" id="G90582">
    <property type="entry name" value="G90582"/>
</dbReference>
<dbReference type="RefSeq" id="WP_010925368.1">
    <property type="nucleotide sequence ID" value="NC_002771.1"/>
</dbReference>
<dbReference type="SMR" id="Q98Q02"/>
<dbReference type="STRING" id="272635.gene:17577174"/>
<dbReference type="KEGG" id="mpu:MYPU_5670"/>
<dbReference type="eggNOG" id="COG0563">
    <property type="taxonomic scope" value="Bacteria"/>
</dbReference>
<dbReference type="HOGENOM" id="CLU_032354_1_2_14"/>
<dbReference type="BioCyc" id="MPUL272635:G1GT6-580-MONOMER"/>
<dbReference type="UniPathway" id="UPA00588">
    <property type="reaction ID" value="UER00649"/>
</dbReference>
<dbReference type="Proteomes" id="UP000000528">
    <property type="component" value="Chromosome"/>
</dbReference>
<dbReference type="GO" id="GO:0005737">
    <property type="term" value="C:cytoplasm"/>
    <property type="evidence" value="ECO:0007669"/>
    <property type="project" value="UniProtKB-SubCell"/>
</dbReference>
<dbReference type="GO" id="GO:0004017">
    <property type="term" value="F:adenylate kinase activity"/>
    <property type="evidence" value="ECO:0007669"/>
    <property type="project" value="UniProtKB-UniRule"/>
</dbReference>
<dbReference type="GO" id="GO:0005524">
    <property type="term" value="F:ATP binding"/>
    <property type="evidence" value="ECO:0007669"/>
    <property type="project" value="UniProtKB-UniRule"/>
</dbReference>
<dbReference type="GO" id="GO:0008270">
    <property type="term" value="F:zinc ion binding"/>
    <property type="evidence" value="ECO:0007669"/>
    <property type="project" value="UniProtKB-UniRule"/>
</dbReference>
<dbReference type="GO" id="GO:0044209">
    <property type="term" value="P:AMP salvage"/>
    <property type="evidence" value="ECO:0007669"/>
    <property type="project" value="UniProtKB-UniRule"/>
</dbReference>
<dbReference type="CDD" id="cd01428">
    <property type="entry name" value="ADK"/>
    <property type="match status" value="1"/>
</dbReference>
<dbReference type="Gene3D" id="3.40.50.300">
    <property type="entry name" value="P-loop containing nucleotide triphosphate hydrolases"/>
    <property type="match status" value="1"/>
</dbReference>
<dbReference type="HAMAP" id="MF_00235">
    <property type="entry name" value="Adenylate_kinase_Adk"/>
    <property type="match status" value="1"/>
</dbReference>
<dbReference type="InterPro" id="IPR006259">
    <property type="entry name" value="Adenyl_kin_sub"/>
</dbReference>
<dbReference type="InterPro" id="IPR000850">
    <property type="entry name" value="Adenylat/UMP-CMP_kin"/>
</dbReference>
<dbReference type="InterPro" id="IPR033690">
    <property type="entry name" value="Adenylat_kinase_CS"/>
</dbReference>
<dbReference type="InterPro" id="IPR007862">
    <property type="entry name" value="Adenylate_kinase_lid-dom"/>
</dbReference>
<dbReference type="InterPro" id="IPR036193">
    <property type="entry name" value="ADK_active_lid_dom_sf"/>
</dbReference>
<dbReference type="InterPro" id="IPR027417">
    <property type="entry name" value="P-loop_NTPase"/>
</dbReference>
<dbReference type="NCBIfam" id="TIGR01351">
    <property type="entry name" value="adk"/>
    <property type="match status" value="1"/>
</dbReference>
<dbReference type="PANTHER" id="PTHR23359">
    <property type="entry name" value="NUCLEOTIDE KINASE"/>
    <property type="match status" value="1"/>
</dbReference>
<dbReference type="Pfam" id="PF00406">
    <property type="entry name" value="ADK"/>
    <property type="match status" value="1"/>
</dbReference>
<dbReference type="Pfam" id="PF05191">
    <property type="entry name" value="ADK_lid"/>
    <property type="match status" value="1"/>
</dbReference>
<dbReference type="PRINTS" id="PR00094">
    <property type="entry name" value="ADENYLTKNASE"/>
</dbReference>
<dbReference type="SUPFAM" id="SSF57774">
    <property type="entry name" value="Microbial and mitochondrial ADK, insert 'zinc finger' domain"/>
    <property type="match status" value="1"/>
</dbReference>
<dbReference type="SUPFAM" id="SSF52540">
    <property type="entry name" value="P-loop containing nucleoside triphosphate hydrolases"/>
    <property type="match status" value="1"/>
</dbReference>
<dbReference type="PROSITE" id="PS00113">
    <property type="entry name" value="ADENYLATE_KINASE"/>
    <property type="match status" value="1"/>
</dbReference>
<protein>
    <recommendedName>
        <fullName evidence="1">Adenylate kinase</fullName>
        <shortName evidence="1">AK</shortName>
        <ecNumber evidence="1">2.7.4.3</ecNumber>
    </recommendedName>
    <alternativeName>
        <fullName evidence="1">ATP-AMP transphosphorylase</fullName>
    </alternativeName>
    <alternativeName>
        <fullName evidence="1">ATP:AMP phosphotransferase</fullName>
    </alternativeName>
    <alternativeName>
        <fullName evidence="1">Adenylate monophosphate kinase</fullName>
    </alternativeName>
</protein>
<gene>
    <name evidence="1" type="primary">adk</name>
    <name type="ordered locus">MYPU_5670</name>
</gene>
<accession>Q98Q02</accession>
<organism>
    <name type="scientific">Mycoplasmopsis pulmonis (strain UAB CTIP)</name>
    <name type="common">Mycoplasma pulmonis</name>
    <dbReference type="NCBI Taxonomy" id="272635"/>
    <lineage>
        <taxon>Bacteria</taxon>
        <taxon>Bacillati</taxon>
        <taxon>Mycoplasmatota</taxon>
        <taxon>Mycoplasmoidales</taxon>
        <taxon>Metamycoplasmataceae</taxon>
        <taxon>Mycoplasmopsis</taxon>
    </lineage>
</organism>
<sequence>MIKRFIVFGPPGVGKGTLASLVSQKYGFEHISTGNIFRSQIASNSELGIKLKEIVESGGYVPDSITNEIVKKTLADLEKEQKSYILDGYPRTLNQIEFLFSLNKAQEYSVWFLEAPSEIILKRLSGRRICPSCNAQYHIYFKKSKLDTKCEIDQSELIQRKDDQESSIIKRLEIYEKQTNSLKKYFKELGILVEIDASKDREEILKELEQKVSL</sequence>
<name>KAD_MYCPU</name>
<proteinExistence type="inferred from homology"/>
<feature type="chain" id="PRO_0000158805" description="Adenylate kinase">
    <location>
        <begin position="1"/>
        <end position="214"/>
    </location>
</feature>
<feature type="region of interest" description="NMP" evidence="1">
    <location>
        <begin position="32"/>
        <end position="61"/>
    </location>
</feature>
<feature type="region of interest" description="LID" evidence="1">
    <location>
        <begin position="126"/>
        <end position="163"/>
    </location>
</feature>
<feature type="binding site" evidence="1">
    <location>
        <begin position="12"/>
        <end position="17"/>
    </location>
    <ligand>
        <name>ATP</name>
        <dbReference type="ChEBI" id="CHEBI:30616"/>
    </ligand>
</feature>
<feature type="binding site" evidence="1">
    <location>
        <position position="33"/>
    </location>
    <ligand>
        <name>AMP</name>
        <dbReference type="ChEBI" id="CHEBI:456215"/>
    </ligand>
</feature>
<feature type="binding site" evidence="1">
    <location>
        <position position="38"/>
    </location>
    <ligand>
        <name>AMP</name>
        <dbReference type="ChEBI" id="CHEBI:456215"/>
    </ligand>
</feature>
<feature type="binding site" evidence="1">
    <location>
        <begin position="59"/>
        <end position="61"/>
    </location>
    <ligand>
        <name>AMP</name>
        <dbReference type="ChEBI" id="CHEBI:456215"/>
    </ligand>
</feature>
<feature type="binding site" evidence="1">
    <location>
        <begin position="88"/>
        <end position="91"/>
    </location>
    <ligand>
        <name>AMP</name>
        <dbReference type="ChEBI" id="CHEBI:456215"/>
    </ligand>
</feature>
<feature type="binding site" evidence="1">
    <location>
        <position position="95"/>
    </location>
    <ligand>
        <name>AMP</name>
        <dbReference type="ChEBI" id="CHEBI:456215"/>
    </ligand>
</feature>
<feature type="binding site" evidence="1">
    <location>
        <position position="127"/>
    </location>
    <ligand>
        <name>ATP</name>
        <dbReference type="ChEBI" id="CHEBI:30616"/>
    </ligand>
</feature>
<feature type="binding site" evidence="1">
    <location>
        <position position="130"/>
    </location>
    <ligand>
        <name>Zn(2+)</name>
        <dbReference type="ChEBI" id="CHEBI:29105"/>
        <note>structural</note>
    </ligand>
</feature>
<feature type="binding site" evidence="1">
    <location>
        <position position="133"/>
    </location>
    <ligand>
        <name>Zn(2+)</name>
        <dbReference type="ChEBI" id="CHEBI:29105"/>
        <note>structural</note>
    </ligand>
</feature>
<feature type="binding site" evidence="1">
    <location>
        <position position="150"/>
    </location>
    <ligand>
        <name>Zn(2+)</name>
        <dbReference type="ChEBI" id="CHEBI:29105"/>
        <note>structural</note>
    </ligand>
</feature>
<feature type="binding site" evidence="1">
    <location>
        <position position="153"/>
    </location>
    <ligand>
        <name>Zn(2+)</name>
        <dbReference type="ChEBI" id="CHEBI:29105"/>
        <note>structural</note>
    </ligand>
</feature>
<feature type="binding site" evidence="1">
    <location>
        <position position="160"/>
    </location>
    <ligand>
        <name>AMP</name>
        <dbReference type="ChEBI" id="CHEBI:456215"/>
    </ligand>
</feature>
<feature type="binding site" evidence="1">
    <location>
        <position position="171"/>
    </location>
    <ligand>
        <name>AMP</name>
        <dbReference type="ChEBI" id="CHEBI:456215"/>
    </ligand>
</feature>
<feature type="binding site" evidence="1">
    <location>
        <position position="199"/>
    </location>
    <ligand>
        <name>ATP</name>
        <dbReference type="ChEBI" id="CHEBI:30616"/>
    </ligand>
</feature>